<gene>
    <name type="primary">Rps16</name>
</gene>
<feature type="chain" id="PRO_0000111480" description="Small ribosomal subunit protein uS9">
    <location>
        <begin position="1"/>
        <end position="146"/>
    </location>
</feature>
<feature type="modified residue" description="Phosphoserine" evidence="1">
    <location>
        <position position="3"/>
    </location>
</feature>
<feature type="modified residue" description="N6-acetyllysine" evidence="1">
    <location>
        <position position="60"/>
    </location>
</feature>
<feature type="sequence conflict" description="In Ref. 1; AAA03646." evidence="3" ref="1">
    <original>AT</original>
    <variation>L</variation>
    <location>
        <begin position="19"/>
        <end position="20"/>
    </location>
</feature>
<feature type="sequence conflict" description="In Ref. 1; AAA03646." evidence="3" ref="1">
    <original>T</original>
    <variation>A</variation>
    <location>
        <position position="46"/>
    </location>
</feature>
<comment type="function">
    <text evidence="1 2">Component of the small ribosomal subunit. The ribosome is a large ribonucleoprotein complex responsible for the synthesis of proteins in the cell (PubMed:36517592). Part of the small subunit (SSU) processome, first precursor of the small eukaryotic ribosomal subunit. During the assembly of the SSU processome in the nucleolus, many ribosome biogenesis factors, an RNA chaperone and ribosomal proteins associate with the nascent pre-rRNA and work in concert to generate RNA folding, modifications, rearrangements and cleavage as well as targeted degradation of pre-ribosomal RNA by the RNA exosome (By similarity).</text>
</comment>
<comment type="subunit">
    <text evidence="1 2">Component of the small ribosomal subunit (PubMed:36517592). Part of the small subunit (SSU) processome, composed of more than 70 proteins and the RNA chaperone small nucleolar RNA (snoRNA) U3 (By similarity).</text>
</comment>
<comment type="subcellular location">
    <subcellularLocation>
        <location evidence="2">Cytoplasm</location>
    </subcellularLocation>
    <subcellularLocation>
        <location evidence="1">Nucleus</location>
        <location evidence="1">Nucleolus</location>
    </subcellularLocation>
</comment>
<comment type="similarity">
    <text evidence="3">Belongs to the universal ribosomal protein uS9 family.</text>
</comment>
<organism>
    <name type="scientific">Mus musculus</name>
    <name type="common">Mouse</name>
    <dbReference type="NCBI Taxonomy" id="10090"/>
    <lineage>
        <taxon>Eukaryota</taxon>
        <taxon>Metazoa</taxon>
        <taxon>Chordata</taxon>
        <taxon>Craniata</taxon>
        <taxon>Vertebrata</taxon>
        <taxon>Euteleostomi</taxon>
        <taxon>Mammalia</taxon>
        <taxon>Eutheria</taxon>
        <taxon>Euarchontoglires</taxon>
        <taxon>Glires</taxon>
        <taxon>Rodentia</taxon>
        <taxon>Myomorpha</taxon>
        <taxon>Muroidea</taxon>
        <taxon>Muridae</taxon>
        <taxon>Murinae</taxon>
        <taxon>Mus</taxon>
        <taxon>Mus</taxon>
    </lineage>
</organism>
<evidence type="ECO:0000250" key="1">
    <source>
        <dbReference type="UniProtKB" id="P62249"/>
    </source>
</evidence>
<evidence type="ECO:0000269" key="2">
    <source>
    </source>
</evidence>
<evidence type="ECO:0000305" key="3"/>
<evidence type="ECO:0007744" key="4">
    <source>
        <dbReference type="PDB" id="7CPU"/>
    </source>
</evidence>
<evidence type="ECO:0007744" key="5">
    <source>
        <dbReference type="PDB" id="7CPV"/>
    </source>
</evidence>
<keyword id="KW-0002">3D-structure</keyword>
<keyword id="KW-0007">Acetylation</keyword>
<keyword id="KW-0963">Cytoplasm</keyword>
<keyword id="KW-0539">Nucleus</keyword>
<keyword id="KW-0597">Phosphoprotein</keyword>
<keyword id="KW-1185">Reference proteome</keyword>
<keyword id="KW-0687">Ribonucleoprotein</keyword>
<keyword id="KW-0689">Ribosomal protein</keyword>
<reference key="1">
    <citation type="journal article" date="1985" name="Mol. Cell. Biol.">
        <title>Characterization of the multigene family encoding the mouse S16 ribosomal protein: strategy for distinguishing an expressed gene from its processed pseudogene counterparts by an analysis of total genomic DNA.</title>
        <authorList>
            <person name="Wagner M."/>
            <person name="Perry R.P."/>
        </authorList>
    </citation>
    <scope>NUCLEOTIDE SEQUENCE</scope>
</reference>
<reference key="2">
    <citation type="journal article" date="2005" name="Science">
        <title>The transcriptional landscape of the mammalian genome.</title>
        <authorList>
            <person name="Carninci P."/>
            <person name="Kasukawa T."/>
            <person name="Katayama S."/>
            <person name="Gough J."/>
            <person name="Frith M.C."/>
            <person name="Maeda N."/>
            <person name="Oyama R."/>
            <person name="Ravasi T."/>
            <person name="Lenhard B."/>
            <person name="Wells C."/>
            <person name="Kodzius R."/>
            <person name="Shimokawa K."/>
            <person name="Bajic V.B."/>
            <person name="Brenner S.E."/>
            <person name="Batalov S."/>
            <person name="Forrest A.R."/>
            <person name="Zavolan M."/>
            <person name="Davis M.J."/>
            <person name="Wilming L.G."/>
            <person name="Aidinis V."/>
            <person name="Allen J.E."/>
            <person name="Ambesi-Impiombato A."/>
            <person name="Apweiler R."/>
            <person name="Aturaliya R.N."/>
            <person name="Bailey T.L."/>
            <person name="Bansal M."/>
            <person name="Baxter L."/>
            <person name="Beisel K.W."/>
            <person name="Bersano T."/>
            <person name="Bono H."/>
            <person name="Chalk A.M."/>
            <person name="Chiu K.P."/>
            <person name="Choudhary V."/>
            <person name="Christoffels A."/>
            <person name="Clutterbuck D.R."/>
            <person name="Crowe M.L."/>
            <person name="Dalla E."/>
            <person name="Dalrymple B.P."/>
            <person name="de Bono B."/>
            <person name="Della Gatta G."/>
            <person name="di Bernardo D."/>
            <person name="Down T."/>
            <person name="Engstrom P."/>
            <person name="Fagiolini M."/>
            <person name="Faulkner G."/>
            <person name="Fletcher C.F."/>
            <person name="Fukushima T."/>
            <person name="Furuno M."/>
            <person name="Futaki S."/>
            <person name="Gariboldi M."/>
            <person name="Georgii-Hemming P."/>
            <person name="Gingeras T.R."/>
            <person name="Gojobori T."/>
            <person name="Green R.E."/>
            <person name="Gustincich S."/>
            <person name="Harbers M."/>
            <person name="Hayashi Y."/>
            <person name="Hensch T.K."/>
            <person name="Hirokawa N."/>
            <person name="Hill D."/>
            <person name="Huminiecki L."/>
            <person name="Iacono M."/>
            <person name="Ikeo K."/>
            <person name="Iwama A."/>
            <person name="Ishikawa T."/>
            <person name="Jakt M."/>
            <person name="Kanapin A."/>
            <person name="Katoh M."/>
            <person name="Kawasawa Y."/>
            <person name="Kelso J."/>
            <person name="Kitamura H."/>
            <person name="Kitano H."/>
            <person name="Kollias G."/>
            <person name="Krishnan S.P."/>
            <person name="Kruger A."/>
            <person name="Kummerfeld S.K."/>
            <person name="Kurochkin I.V."/>
            <person name="Lareau L.F."/>
            <person name="Lazarevic D."/>
            <person name="Lipovich L."/>
            <person name="Liu J."/>
            <person name="Liuni S."/>
            <person name="McWilliam S."/>
            <person name="Madan Babu M."/>
            <person name="Madera M."/>
            <person name="Marchionni L."/>
            <person name="Matsuda H."/>
            <person name="Matsuzawa S."/>
            <person name="Miki H."/>
            <person name="Mignone F."/>
            <person name="Miyake S."/>
            <person name="Morris K."/>
            <person name="Mottagui-Tabar S."/>
            <person name="Mulder N."/>
            <person name="Nakano N."/>
            <person name="Nakauchi H."/>
            <person name="Ng P."/>
            <person name="Nilsson R."/>
            <person name="Nishiguchi S."/>
            <person name="Nishikawa S."/>
            <person name="Nori F."/>
            <person name="Ohara O."/>
            <person name="Okazaki Y."/>
            <person name="Orlando V."/>
            <person name="Pang K.C."/>
            <person name="Pavan W.J."/>
            <person name="Pavesi G."/>
            <person name="Pesole G."/>
            <person name="Petrovsky N."/>
            <person name="Piazza S."/>
            <person name="Reed J."/>
            <person name="Reid J.F."/>
            <person name="Ring B.Z."/>
            <person name="Ringwald M."/>
            <person name="Rost B."/>
            <person name="Ruan Y."/>
            <person name="Salzberg S.L."/>
            <person name="Sandelin A."/>
            <person name="Schneider C."/>
            <person name="Schoenbach C."/>
            <person name="Sekiguchi K."/>
            <person name="Semple C.A."/>
            <person name="Seno S."/>
            <person name="Sessa L."/>
            <person name="Sheng Y."/>
            <person name="Shibata Y."/>
            <person name="Shimada H."/>
            <person name="Shimada K."/>
            <person name="Silva D."/>
            <person name="Sinclair B."/>
            <person name="Sperling S."/>
            <person name="Stupka E."/>
            <person name="Sugiura K."/>
            <person name="Sultana R."/>
            <person name="Takenaka Y."/>
            <person name="Taki K."/>
            <person name="Tammoja K."/>
            <person name="Tan S.L."/>
            <person name="Tang S."/>
            <person name="Taylor M.S."/>
            <person name="Tegner J."/>
            <person name="Teichmann S.A."/>
            <person name="Ueda H.R."/>
            <person name="van Nimwegen E."/>
            <person name="Verardo R."/>
            <person name="Wei C.L."/>
            <person name="Yagi K."/>
            <person name="Yamanishi H."/>
            <person name="Zabarovsky E."/>
            <person name="Zhu S."/>
            <person name="Zimmer A."/>
            <person name="Hide W."/>
            <person name="Bult C."/>
            <person name="Grimmond S.M."/>
            <person name="Teasdale R.D."/>
            <person name="Liu E.T."/>
            <person name="Brusic V."/>
            <person name="Quackenbush J."/>
            <person name="Wahlestedt C."/>
            <person name="Mattick J.S."/>
            <person name="Hume D.A."/>
            <person name="Kai C."/>
            <person name="Sasaki D."/>
            <person name="Tomaru Y."/>
            <person name="Fukuda S."/>
            <person name="Kanamori-Katayama M."/>
            <person name="Suzuki M."/>
            <person name="Aoki J."/>
            <person name="Arakawa T."/>
            <person name="Iida J."/>
            <person name="Imamura K."/>
            <person name="Itoh M."/>
            <person name="Kato T."/>
            <person name="Kawaji H."/>
            <person name="Kawagashira N."/>
            <person name="Kawashima T."/>
            <person name="Kojima M."/>
            <person name="Kondo S."/>
            <person name="Konno H."/>
            <person name="Nakano K."/>
            <person name="Ninomiya N."/>
            <person name="Nishio T."/>
            <person name="Okada M."/>
            <person name="Plessy C."/>
            <person name="Shibata K."/>
            <person name="Shiraki T."/>
            <person name="Suzuki S."/>
            <person name="Tagami M."/>
            <person name="Waki K."/>
            <person name="Watahiki A."/>
            <person name="Okamura-Oho Y."/>
            <person name="Suzuki H."/>
            <person name="Kawai J."/>
            <person name="Hayashizaki Y."/>
        </authorList>
    </citation>
    <scope>NUCLEOTIDE SEQUENCE [LARGE SCALE MRNA]</scope>
    <source>
        <strain>C57BL/6J</strain>
        <strain>NOD</strain>
        <tissue>Bone marrow</tissue>
        <tissue>Head</tissue>
        <tissue>Kidney</tissue>
        <tissue>Liver</tissue>
        <tissue>Spinal ganglion</tissue>
        <tissue>Thymus</tissue>
    </source>
</reference>
<reference key="3">
    <citation type="journal article" date="2010" name="Cell">
        <title>A tissue-specific atlas of mouse protein phosphorylation and expression.</title>
        <authorList>
            <person name="Huttlin E.L."/>
            <person name="Jedrychowski M.P."/>
            <person name="Elias J.E."/>
            <person name="Goswami T."/>
            <person name="Rad R."/>
            <person name="Beausoleil S.A."/>
            <person name="Villen J."/>
            <person name="Haas W."/>
            <person name="Sowa M.E."/>
            <person name="Gygi S.P."/>
        </authorList>
    </citation>
    <scope>IDENTIFICATION BY MASS SPECTROMETRY [LARGE SCALE ANALYSIS]</scope>
    <source>
        <tissue>Brain</tissue>
        <tissue>Brown adipose tissue</tissue>
        <tissue>Heart</tissue>
        <tissue>Kidney</tissue>
        <tissue>Liver</tissue>
        <tissue>Lung</tissue>
        <tissue>Pancreas</tissue>
        <tissue>Spleen</tissue>
        <tissue>Testis</tissue>
    </source>
</reference>
<reference evidence="4 5" key="4">
    <citation type="journal article" date="2022" name="Nature">
        <title>A male germ-cell-specific ribosome controls male fertility.</title>
        <authorList>
            <person name="Li H."/>
            <person name="Huo Y."/>
            <person name="He X."/>
            <person name="Yao L."/>
            <person name="Zhang H."/>
            <person name="Cui Y."/>
            <person name="Xiao H."/>
            <person name="Xie W."/>
            <person name="Zhang D."/>
            <person name="Wang Y."/>
            <person name="Zhang S."/>
            <person name="Tu H."/>
            <person name="Cheng Y."/>
            <person name="Guo Y."/>
            <person name="Cao X."/>
            <person name="Zhu Y."/>
            <person name="Jiang T."/>
            <person name="Guo X."/>
            <person name="Qin Y."/>
            <person name="Sha J."/>
        </authorList>
    </citation>
    <scope>STRUCTURE BY ELECTRON MICROSCOPY (3.03 ANGSTROMS) OF RIBOSOME</scope>
    <scope>FUNCTION</scope>
    <scope>SUBUNIT</scope>
    <scope>SUBCELLULAR LOCATION</scope>
</reference>
<protein>
    <recommendedName>
        <fullName evidence="3">Small ribosomal subunit protein uS9</fullName>
    </recommendedName>
    <alternativeName>
        <fullName>40S ribosomal protein S16</fullName>
    </alternativeName>
</protein>
<proteinExistence type="evidence at protein level"/>
<accession>P14131</accession>
<accession>Q3THM9</accession>
<sequence length="146" mass="16445">MPSKGPLQSVQVFGRKKTATAVAHCKRGNGLIKVNGRPLEMIEPRTLQYKLLEPVLLLGKERFAGVDIRVRVKGGGHVAQIYAIRQSISKALVAYYQKYVDEASKKEIKDILIQYDRTLLVADPRRCESKKFGGPGARARYQKSYR</sequence>
<dbReference type="EMBL" id="M11408">
    <property type="protein sequence ID" value="AAA03646.1"/>
    <property type="molecule type" value="Unassigned_DNA"/>
</dbReference>
<dbReference type="EMBL" id="AK010613">
    <property type="protein sequence ID" value="BAB27062.1"/>
    <property type="molecule type" value="mRNA"/>
</dbReference>
<dbReference type="EMBL" id="AK010641">
    <property type="protein sequence ID" value="BAB27083.1"/>
    <property type="molecule type" value="mRNA"/>
</dbReference>
<dbReference type="EMBL" id="AK011060">
    <property type="protein sequence ID" value="BAB27368.1"/>
    <property type="molecule type" value="mRNA"/>
</dbReference>
<dbReference type="EMBL" id="AK019400">
    <property type="protein sequence ID" value="BAB31702.1"/>
    <property type="molecule type" value="mRNA"/>
</dbReference>
<dbReference type="EMBL" id="AK083946">
    <property type="protein sequence ID" value="BAC39077.1"/>
    <property type="molecule type" value="mRNA"/>
</dbReference>
<dbReference type="EMBL" id="AK088413">
    <property type="protein sequence ID" value="BAC40341.1"/>
    <property type="molecule type" value="mRNA"/>
</dbReference>
<dbReference type="EMBL" id="AK088716">
    <property type="protein sequence ID" value="BAC40524.1"/>
    <property type="molecule type" value="mRNA"/>
</dbReference>
<dbReference type="EMBL" id="AK150808">
    <property type="protein sequence ID" value="BAE29871.1"/>
    <property type="molecule type" value="mRNA"/>
</dbReference>
<dbReference type="EMBL" id="AK168207">
    <property type="protein sequence ID" value="BAE40167.1"/>
    <property type="molecule type" value="mRNA"/>
</dbReference>
<dbReference type="EMBL" id="AK169328">
    <property type="protein sequence ID" value="BAE41081.1"/>
    <property type="molecule type" value="mRNA"/>
</dbReference>
<dbReference type="CCDS" id="CCDS39858.1"/>
<dbReference type="PIR" id="S11623">
    <property type="entry name" value="R3MS16"/>
</dbReference>
<dbReference type="RefSeq" id="NP_038675.2">
    <property type="nucleotide sequence ID" value="NM_013647.2"/>
</dbReference>
<dbReference type="PDB" id="7CPU">
    <property type="method" value="EM"/>
    <property type="resolution" value="2.82 A"/>
    <property type="chains" value="SQ=1-146"/>
</dbReference>
<dbReference type="PDB" id="7CPV">
    <property type="method" value="EM"/>
    <property type="resolution" value="3.03 A"/>
    <property type="chains" value="SQ=1-146"/>
</dbReference>
<dbReference type="PDB" id="7LS1">
    <property type="method" value="EM"/>
    <property type="resolution" value="3.30 A"/>
    <property type="chains" value="y2=1-146"/>
</dbReference>
<dbReference type="PDB" id="7LS2">
    <property type="method" value="EM"/>
    <property type="resolution" value="3.10 A"/>
    <property type="chains" value="y2=1-146"/>
</dbReference>
<dbReference type="PDBsum" id="7CPU"/>
<dbReference type="PDBsum" id="7CPV"/>
<dbReference type="PDBsum" id="7LS1"/>
<dbReference type="PDBsum" id="7LS2"/>
<dbReference type="EMDB" id="EMD-23500"/>
<dbReference type="EMDB" id="EMD-23501"/>
<dbReference type="EMDB" id="EMD-30432"/>
<dbReference type="EMDB" id="EMD-30433"/>
<dbReference type="SMR" id="P14131"/>
<dbReference type="BioGRID" id="203004">
    <property type="interactions" value="108"/>
</dbReference>
<dbReference type="ComplexPortal" id="CPX-5261">
    <property type="entry name" value="40S cytosolic small ribosomal subunit"/>
</dbReference>
<dbReference type="FunCoup" id="P14131">
    <property type="interactions" value="1717"/>
</dbReference>
<dbReference type="IntAct" id="P14131">
    <property type="interactions" value="7"/>
</dbReference>
<dbReference type="MINT" id="P14131"/>
<dbReference type="STRING" id="10090.ENSMUSP00000103940"/>
<dbReference type="GlyGen" id="P14131">
    <property type="glycosylation" value="1 site, 1 O-linked glycan (1 site)"/>
</dbReference>
<dbReference type="iPTMnet" id="P14131"/>
<dbReference type="PhosphoSitePlus" id="P14131"/>
<dbReference type="SwissPalm" id="P14131"/>
<dbReference type="jPOST" id="P14131"/>
<dbReference type="PaxDb" id="10090-ENSMUSP00000103940"/>
<dbReference type="ProteomicsDB" id="299938"/>
<dbReference type="Pumba" id="P14131"/>
<dbReference type="Antibodypedia" id="30342">
    <property type="antibodies" value="204 antibodies from 25 providers"/>
</dbReference>
<dbReference type="DNASU" id="20055"/>
<dbReference type="Ensembl" id="ENSMUST00000082134.6">
    <property type="protein sequence ID" value="ENSMUSP00000103940.2"/>
    <property type="gene ID" value="ENSMUSG00000037563.16"/>
</dbReference>
<dbReference type="GeneID" id="20055"/>
<dbReference type="KEGG" id="mmu:20055"/>
<dbReference type="UCSC" id="uc012fgr.1">
    <property type="organism name" value="mouse"/>
</dbReference>
<dbReference type="AGR" id="MGI:98118"/>
<dbReference type="CTD" id="6217"/>
<dbReference type="MGI" id="MGI:98118">
    <property type="gene designation" value="Rps16"/>
</dbReference>
<dbReference type="VEuPathDB" id="HostDB:ENSMUSG00000037563"/>
<dbReference type="eggNOG" id="KOG1753">
    <property type="taxonomic scope" value="Eukaryota"/>
</dbReference>
<dbReference type="GeneTree" id="ENSGT00390000013067"/>
<dbReference type="HOGENOM" id="CLU_046483_4_0_1"/>
<dbReference type="InParanoid" id="P14131"/>
<dbReference type="OMA" id="WPIEMAR"/>
<dbReference type="OrthoDB" id="426865at2759"/>
<dbReference type="PhylomeDB" id="P14131"/>
<dbReference type="TreeFam" id="TF300088"/>
<dbReference type="Reactome" id="R-MMU-156827">
    <property type="pathway name" value="L13a-mediated translational silencing of Ceruloplasmin expression"/>
</dbReference>
<dbReference type="Reactome" id="R-MMU-1799339">
    <property type="pathway name" value="SRP-dependent cotranslational protein targeting to membrane"/>
</dbReference>
<dbReference type="Reactome" id="R-MMU-6791226">
    <property type="pathway name" value="Major pathway of rRNA processing in the nucleolus and cytosol"/>
</dbReference>
<dbReference type="Reactome" id="R-MMU-72649">
    <property type="pathway name" value="Translation initiation complex formation"/>
</dbReference>
<dbReference type="Reactome" id="R-MMU-72689">
    <property type="pathway name" value="Formation of a pool of free 40S subunits"/>
</dbReference>
<dbReference type="Reactome" id="R-MMU-72695">
    <property type="pathway name" value="Formation of the ternary complex, and subsequently, the 43S complex"/>
</dbReference>
<dbReference type="Reactome" id="R-MMU-72702">
    <property type="pathway name" value="Ribosomal scanning and start codon recognition"/>
</dbReference>
<dbReference type="Reactome" id="R-MMU-72706">
    <property type="pathway name" value="GTP hydrolysis and joining of the 60S ribosomal subunit"/>
</dbReference>
<dbReference type="Reactome" id="R-MMU-975956">
    <property type="pathway name" value="Nonsense Mediated Decay (NMD) independent of the Exon Junction Complex (EJC)"/>
</dbReference>
<dbReference type="Reactome" id="R-MMU-975957">
    <property type="pathway name" value="Nonsense Mediated Decay (NMD) enhanced by the Exon Junction Complex (EJC)"/>
</dbReference>
<dbReference type="BioGRID-ORCS" id="20055">
    <property type="hits" value="25 hits in 75 CRISPR screens"/>
</dbReference>
<dbReference type="CD-CODE" id="CE726F99">
    <property type="entry name" value="Postsynaptic density"/>
</dbReference>
<dbReference type="ChiTaRS" id="Rps16">
    <property type="organism name" value="mouse"/>
</dbReference>
<dbReference type="PRO" id="PR:P14131"/>
<dbReference type="Proteomes" id="UP000000589">
    <property type="component" value="Chromosome 7"/>
</dbReference>
<dbReference type="RNAct" id="P14131">
    <property type="molecule type" value="protein"/>
</dbReference>
<dbReference type="Bgee" id="ENSMUSG00000037563">
    <property type="expression patterns" value="Expressed in yolk sac and 66 other cell types or tissues"/>
</dbReference>
<dbReference type="ExpressionAtlas" id="P14131">
    <property type="expression patterns" value="baseline and differential"/>
</dbReference>
<dbReference type="GO" id="GO:0005737">
    <property type="term" value="C:cytoplasm"/>
    <property type="evidence" value="ECO:0000303"/>
    <property type="project" value="ComplexPortal"/>
</dbReference>
<dbReference type="GO" id="GO:0005829">
    <property type="term" value="C:cytosol"/>
    <property type="evidence" value="ECO:0000304"/>
    <property type="project" value="Reactome"/>
</dbReference>
<dbReference type="GO" id="GO:0022627">
    <property type="term" value="C:cytosolic small ribosomal subunit"/>
    <property type="evidence" value="ECO:0000314"/>
    <property type="project" value="UniProtKB"/>
</dbReference>
<dbReference type="GO" id="GO:0005730">
    <property type="term" value="C:nucleolus"/>
    <property type="evidence" value="ECO:0007669"/>
    <property type="project" value="UniProtKB-SubCell"/>
</dbReference>
<dbReference type="GO" id="GO:0098794">
    <property type="term" value="C:postsynapse"/>
    <property type="evidence" value="ECO:0000303"/>
    <property type="project" value="SynGO"/>
</dbReference>
<dbReference type="GO" id="GO:0098793">
    <property type="term" value="C:presynapse"/>
    <property type="evidence" value="ECO:0000303"/>
    <property type="project" value="SynGO"/>
</dbReference>
<dbReference type="GO" id="GO:0005840">
    <property type="term" value="C:ribosome"/>
    <property type="evidence" value="ECO:0000303"/>
    <property type="project" value="SynGO"/>
</dbReference>
<dbReference type="GO" id="GO:0015935">
    <property type="term" value="C:small ribosomal subunit"/>
    <property type="evidence" value="ECO:0000250"/>
    <property type="project" value="UniProtKB"/>
</dbReference>
<dbReference type="GO" id="GO:0032040">
    <property type="term" value="C:small-subunit processome"/>
    <property type="evidence" value="ECO:0000250"/>
    <property type="project" value="UniProtKB"/>
</dbReference>
<dbReference type="GO" id="GO:0045202">
    <property type="term" value="C:synapse"/>
    <property type="evidence" value="ECO:0000314"/>
    <property type="project" value="SynGO"/>
</dbReference>
<dbReference type="GO" id="GO:0003723">
    <property type="term" value="F:RNA binding"/>
    <property type="evidence" value="ECO:0007669"/>
    <property type="project" value="Ensembl"/>
</dbReference>
<dbReference type="GO" id="GO:0003735">
    <property type="term" value="F:structural constituent of ribosome"/>
    <property type="evidence" value="ECO:0000314"/>
    <property type="project" value="UniProtKB"/>
</dbReference>
<dbReference type="GO" id="GO:1990830">
    <property type="term" value="P:cellular response to leukemia inhibitory factor"/>
    <property type="evidence" value="ECO:0000270"/>
    <property type="project" value="MGI"/>
</dbReference>
<dbReference type="GO" id="GO:0002181">
    <property type="term" value="P:cytoplasmic translation"/>
    <property type="evidence" value="ECO:0000303"/>
    <property type="project" value="ComplexPortal"/>
</dbReference>
<dbReference type="GO" id="GO:0042274">
    <property type="term" value="P:ribosomal small subunit biogenesis"/>
    <property type="evidence" value="ECO:0000250"/>
    <property type="project" value="UniProtKB"/>
</dbReference>
<dbReference type="GO" id="GO:0006364">
    <property type="term" value="P:rRNA processing"/>
    <property type="evidence" value="ECO:0007669"/>
    <property type="project" value="Ensembl"/>
</dbReference>
<dbReference type="GO" id="GO:0140242">
    <property type="term" value="P:translation at postsynapse"/>
    <property type="evidence" value="ECO:0000303"/>
    <property type="project" value="SynGO"/>
</dbReference>
<dbReference type="GO" id="GO:0140236">
    <property type="term" value="P:translation at presynapse"/>
    <property type="evidence" value="ECO:0000303"/>
    <property type="project" value="SynGO"/>
</dbReference>
<dbReference type="FunFam" id="3.30.230.10:FF:000184">
    <property type="entry name" value="40S ribosomal protein S16"/>
    <property type="match status" value="1"/>
</dbReference>
<dbReference type="Gene3D" id="3.30.230.10">
    <property type="match status" value="1"/>
</dbReference>
<dbReference type="InterPro" id="IPR020568">
    <property type="entry name" value="Ribosomal_Su5_D2-typ_SF"/>
</dbReference>
<dbReference type="InterPro" id="IPR000754">
    <property type="entry name" value="Ribosomal_uS9"/>
</dbReference>
<dbReference type="InterPro" id="IPR020574">
    <property type="entry name" value="Ribosomal_uS9_CS"/>
</dbReference>
<dbReference type="InterPro" id="IPR014721">
    <property type="entry name" value="Ribsml_uS5_D2-typ_fold_subgr"/>
</dbReference>
<dbReference type="PANTHER" id="PTHR21569:SF16">
    <property type="entry name" value="RIBOSOMAL PROTEIN S16"/>
    <property type="match status" value="1"/>
</dbReference>
<dbReference type="PANTHER" id="PTHR21569">
    <property type="entry name" value="RIBOSOMAL PROTEIN S9"/>
    <property type="match status" value="1"/>
</dbReference>
<dbReference type="Pfam" id="PF00380">
    <property type="entry name" value="Ribosomal_S9"/>
    <property type="match status" value="1"/>
</dbReference>
<dbReference type="SUPFAM" id="SSF54211">
    <property type="entry name" value="Ribosomal protein S5 domain 2-like"/>
    <property type="match status" value="1"/>
</dbReference>
<dbReference type="PROSITE" id="PS00360">
    <property type="entry name" value="RIBOSOMAL_S9"/>
    <property type="match status" value="1"/>
</dbReference>
<name>RS16_MOUSE</name>